<protein>
    <recommendedName>
        <fullName evidence="1">2,3-bisphosphoglycerate-independent phosphoglycerate mutase</fullName>
        <shortName evidence="1">BPG-independent PGAM</shortName>
        <shortName evidence="1">Phosphoglyceromutase</shortName>
        <shortName evidence="1">iPGM</shortName>
        <ecNumber evidence="1">5.4.2.12</ecNumber>
    </recommendedName>
</protein>
<accession>A3PMX9</accession>
<organism>
    <name type="scientific">Cereibacter sphaeroides (strain ATCC 17029 / ATH 2.4.9)</name>
    <name type="common">Rhodobacter sphaeroides</name>
    <dbReference type="NCBI Taxonomy" id="349101"/>
    <lineage>
        <taxon>Bacteria</taxon>
        <taxon>Pseudomonadati</taxon>
        <taxon>Pseudomonadota</taxon>
        <taxon>Alphaproteobacteria</taxon>
        <taxon>Rhodobacterales</taxon>
        <taxon>Paracoccaceae</taxon>
        <taxon>Cereibacter</taxon>
    </lineage>
</organism>
<dbReference type="EC" id="5.4.2.12" evidence="1"/>
<dbReference type="EMBL" id="CP000577">
    <property type="protein sequence ID" value="ABN77695.1"/>
    <property type="molecule type" value="Genomic_DNA"/>
</dbReference>
<dbReference type="RefSeq" id="WP_011841771.1">
    <property type="nucleotide sequence ID" value="NC_009049.1"/>
</dbReference>
<dbReference type="SMR" id="A3PMX9"/>
<dbReference type="KEGG" id="rsh:Rsph17029_2593"/>
<dbReference type="HOGENOM" id="CLU_026099_2_0_5"/>
<dbReference type="UniPathway" id="UPA00109">
    <property type="reaction ID" value="UER00186"/>
</dbReference>
<dbReference type="GO" id="GO:0005829">
    <property type="term" value="C:cytosol"/>
    <property type="evidence" value="ECO:0007669"/>
    <property type="project" value="TreeGrafter"/>
</dbReference>
<dbReference type="GO" id="GO:0030145">
    <property type="term" value="F:manganese ion binding"/>
    <property type="evidence" value="ECO:0007669"/>
    <property type="project" value="UniProtKB-UniRule"/>
</dbReference>
<dbReference type="GO" id="GO:0004619">
    <property type="term" value="F:phosphoglycerate mutase activity"/>
    <property type="evidence" value="ECO:0007669"/>
    <property type="project" value="UniProtKB-EC"/>
</dbReference>
<dbReference type="GO" id="GO:0006007">
    <property type="term" value="P:glucose catabolic process"/>
    <property type="evidence" value="ECO:0007669"/>
    <property type="project" value="InterPro"/>
</dbReference>
<dbReference type="GO" id="GO:0006096">
    <property type="term" value="P:glycolytic process"/>
    <property type="evidence" value="ECO:0007669"/>
    <property type="project" value="UniProtKB-UniRule"/>
</dbReference>
<dbReference type="CDD" id="cd16010">
    <property type="entry name" value="iPGM"/>
    <property type="match status" value="1"/>
</dbReference>
<dbReference type="FunFam" id="3.40.1450.10:FF:000002">
    <property type="entry name" value="2,3-bisphosphoglycerate-independent phosphoglycerate mutase"/>
    <property type="match status" value="1"/>
</dbReference>
<dbReference type="Gene3D" id="3.40.720.10">
    <property type="entry name" value="Alkaline Phosphatase, subunit A"/>
    <property type="match status" value="1"/>
</dbReference>
<dbReference type="Gene3D" id="3.40.1450.10">
    <property type="entry name" value="BPG-independent phosphoglycerate mutase, domain B"/>
    <property type="match status" value="1"/>
</dbReference>
<dbReference type="HAMAP" id="MF_01038">
    <property type="entry name" value="GpmI"/>
    <property type="match status" value="1"/>
</dbReference>
<dbReference type="InterPro" id="IPR017850">
    <property type="entry name" value="Alkaline_phosphatase_core_sf"/>
</dbReference>
<dbReference type="InterPro" id="IPR011258">
    <property type="entry name" value="BPG-indep_PGM_N"/>
</dbReference>
<dbReference type="InterPro" id="IPR006124">
    <property type="entry name" value="Metalloenzyme"/>
</dbReference>
<dbReference type="InterPro" id="IPR036646">
    <property type="entry name" value="PGAM_B_sf"/>
</dbReference>
<dbReference type="InterPro" id="IPR005995">
    <property type="entry name" value="Pgm_bpd_ind"/>
</dbReference>
<dbReference type="NCBIfam" id="TIGR01307">
    <property type="entry name" value="pgm_bpd_ind"/>
    <property type="match status" value="1"/>
</dbReference>
<dbReference type="PANTHER" id="PTHR31637">
    <property type="entry name" value="2,3-BISPHOSPHOGLYCERATE-INDEPENDENT PHOSPHOGLYCERATE MUTASE"/>
    <property type="match status" value="1"/>
</dbReference>
<dbReference type="PANTHER" id="PTHR31637:SF0">
    <property type="entry name" value="2,3-BISPHOSPHOGLYCERATE-INDEPENDENT PHOSPHOGLYCERATE MUTASE"/>
    <property type="match status" value="1"/>
</dbReference>
<dbReference type="Pfam" id="PF06415">
    <property type="entry name" value="iPGM_N"/>
    <property type="match status" value="1"/>
</dbReference>
<dbReference type="Pfam" id="PF01676">
    <property type="entry name" value="Metalloenzyme"/>
    <property type="match status" value="1"/>
</dbReference>
<dbReference type="PIRSF" id="PIRSF001492">
    <property type="entry name" value="IPGAM"/>
    <property type="match status" value="1"/>
</dbReference>
<dbReference type="SUPFAM" id="SSF64158">
    <property type="entry name" value="2,3-Bisphosphoglycerate-independent phosphoglycerate mutase, substrate-binding domain"/>
    <property type="match status" value="1"/>
</dbReference>
<dbReference type="SUPFAM" id="SSF53649">
    <property type="entry name" value="Alkaline phosphatase-like"/>
    <property type="match status" value="1"/>
</dbReference>
<name>GPMI_CERS1</name>
<evidence type="ECO:0000255" key="1">
    <source>
        <dbReference type="HAMAP-Rule" id="MF_01038"/>
    </source>
</evidence>
<sequence>MTAPKPVVLCILDGWGLRAEREANAVALADTPTFDRLMATCPNATLVTHGPDVGLPRGQMGNSEVGHTNIGAGRVVAMDLGAIDLAIEEGSFPQNPALRDFIAKVKANGGTAHLMGVVSDGGVHGHIQHLISAVEVLAGEGIPVVIHAITDGRDVAPTSAGEFVGQLVRVLPEGARIGTVIGRYWAMDRDKRWDRVKRASDAMLHATGEHAPDAEAAVAAALARGETDEFIAPTVVGDYAGARDGDGFFCLNFRADRAREILAGLGQPGFDAYETGTRPDWSAFLGMVDYSKEHDRFMTAAYPKPVIRNTLGEWVASHGLRQFRIAETEKYPHVTFFLNGGREAPETGEDRYMANSPKVATYDLQPEMSAPDVSDHLVEAIGAGYDLIVVNYANPDMVGHTGDLKAAMAAVEEVDRGLGRAVEAVTTAGGAMIVTADHGNCETMVDPETGGPHTAHTTNPVPVILVNGPAGARLHAGRLADLAPTLLQLMQLPQPEEMTGRSLIDA</sequence>
<reference key="1">
    <citation type="submission" date="2007-02" db="EMBL/GenBank/DDBJ databases">
        <title>Complete sequence of chromosome 1 of Rhodobacter sphaeroides ATCC 17029.</title>
        <authorList>
            <person name="Copeland A."/>
            <person name="Lucas S."/>
            <person name="Lapidus A."/>
            <person name="Barry K."/>
            <person name="Detter J.C."/>
            <person name="Glavina del Rio T."/>
            <person name="Hammon N."/>
            <person name="Israni S."/>
            <person name="Dalin E."/>
            <person name="Tice H."/>
            <person name="Pitluck S."/>
            <person name="Kiss H."/>
            <person name="Brettin T."/>
            <person name="Bruce D."/>
            <person name="Han C."/>
            <person name="Tapia R."/>
            <person name="Gilna P."/>
            <person name="Schmutz J."/>
            <person name="Larimer F."/>
            <person name="Land M."/>
            <person name="Hauser L."/>
            <person name="Kyrpides N."/>
            <person name="Mikhailova N."/>
            <person name="Richardson P."/>
            <person name="Mackenzie C."/>
            <person name="Choudhary M."/>
            <person name="Donohue T.J."/>
            <person name="Kaplan S."/>
        </authorList>
    </citation>
    <scope>NUCLEOTIDE SEQUENCE [LARGE SCALE GENOMIC DNA]</scope>
    <source>
        <strain>ATCC 17029 / ATH 2.4.9</strain>
    </source>
</reference>
<gene>
    <name evidence="1" type="primary">gpmI</name>
    <name type="ordered locus">Rsph17029_2593</name>
</gene>
<keyword id="KW-0324">Glycolysis</keyword>
<keyword id="KW-0413">Isomerase</keyword>
<keyword id="KW-0464">Manganese</keyword>
<keyword id="KW-0479">Metal-binding</keyword>
<feature type="chain" id="PRO_1000063994" description="2,3-bisphosphoglycerate-independent phosphoglycerate mutase">
    <location>
        <begin position="1"/>
        <end position="506"/>
    </location>
</feature>
<feature type="active site" description="Phosphoserine intermediate" evidence="1">
    <location>
        <position position="63"/>
    </location>
</feature>
<feature type="binding site" evidence="1">
    <location>
        <position position="13"/>
    </location>
    <ligand>
        <name>Mn(2+)</name>
        <dbReference type="ChEBI" id="CHEBI:29035"/>
        <label>2</label>
    </ligand>
</feature>
<feature type="binding site" evidence="1">
    <location>
        <position position="63"/>
    </location>
    <ligand>
        <name>Mn(2+)</name>
        <dbReference type="ChEBI" id="CHEBI:29035"/>
        <label>2</label>
    </ligand>
</feature>
<feature type="binding site" evidence="1">
    <location>
        <position position="124"/>
    </location>
    <ligand>
        <name>substrate</name>
    </ligand>
</feature>
<feature type="binding site" evidence="1">
    <location>
        <begin position="153"/>
        <end position="154"/>
    </location>
    <ligand>
        <name>substrate</name>
    </ligand>
</feature>
<feature type="binding site" evidence="1">
    <location>
        <position position="183"/>
    </location>
    <ligand>
        <name>substrate</name>
    </ligand>
</feature>
<feature type="binding site" evidence="1">
    <location>
        <position position="189"/>
    </location>
    <ligand>
        <name>substrate</name>
    </ligand>
</feature>
<feature type="binding site" evidence="1">
    <location>
        <begin position="254"/>
        <end position="257"/>
    </location>
    <ligand>
        <name>substrate</name>
    </ligand>
</feature>
<feature type="binding site" evidence="1">
    <location>
        <position position="330"/>
    </location>
    <ligand>
        <name>substrate</name>
    </ligand>
</feature>
<feature type="binding site" evidence="1">
    <location>
        <position position="396"/>
    </location>
    <ligand>
        <name>Mn(2+)</name>
        <dbReference type="ChEBI" id="CHEBI:29035"/>
        <label>1</label>
    </ligand>
</feature>
<feature type="binding site" evidence="1">
    <location>
        <position position="400"/>
    </location>
    <ligand>
        <name>Mn(2+)</name>
        <dbReference type="ChEBI" id="CHEBI:29035"/>
        <label>1</label>
    </ligand>
</feature>
<feature type="binding site" evidence="1">
    <location>
        <position position="437"/>
    </location>
    <ligand>
        <name>Mn(2+)</name>
        <dbReference type="ChEBI" id="CHEBI:29035"/>
        <label>2</label>
    </ligand>
</feature>
<feature type="binding site" evidence="1">
    <location>
        <position position="438"/>
    </location>
    <ligand>
        <name>Mn(2+)</name>
        <dbReference type="ChEBI" id="CHEBI:29035"/>
        <label>2</label>
    </ligand>
</feature>
<feature type="binding site" evidence="1">
    <location>
        <position position="456"/>
    </location>
    <ligand>
        <name>Mn(2+)</name>
        <dbReference type="ChEBI" id="CHEBI:29035"/>
        <label>1</label>
    </ligand>
</feature>
<comment type="function">
    <text evidence="1">Catalyzes the interconversion of 2-phosphoglycerate and 3-phosphoglycerate.</text>
</comment>
<comment type="catalytic activity">
    <reaction evidence="1">
        <text>(2R)-2-phosphoglycerate = (2R)-3-phosphoglycerate</text>
        <dbReference type="Rhea" id="RHEA:15901"/>
        <dbReference type="ChEBI" id="CHEBI:58272"/>
        <dbReference type="ChEBI" id="CHEBI:58289"/>
        <dbReference type="EC" id="5.4.2.12"/>
    </reaction>
</comment>
<comment type="cofactor">
    <cofactor evidence="1">
        <name>Mn(2+)</name>
        <dbReference type="ChEBI" id="CHEBI:29035"/>
    </cofactor>
    <text evidence="1">Binds 2 manganese ions per subunit.</text>
</comment>
<comment type="pathway">
    <text evidence="1">Carbohydrate degradation; glycolysis; pyruvate from D-glyceraldehyde 3-phosphate: step 3/5.</text>
</comment>
<comment type="subunit">
    <text evidence="1">Monomer.</text>
</comment>
<comment type="similarity">
    <text evidence="1">Belongs to the BPG-independent phosphoglycerate mutase family.</text>
</comment>
<proteinExistence type="inferred from homology"/>